<evidence type="ECO:0000255" key="1">
    <source>
        <dbReference type="HAMAP-Rule" id="MF_00735"/>
    </source>
</evidence>
<gene>
    <name evidence="1" type="primary">prmA</name>
    <name type="ordered locus">SeSA_A3575</name>
</gene>
<proteinExistence type="inferred from homology"/>
<keyword id="KW-0963">Cytoplasm</keyword>
<keyword id="KW-0489">Methyltransferase</keyword>
<keyword id="KW-0949">S-adenosyl-L-methionine</keyword>
<keyword id="KW-0808">Transferase</keyword>
<accession>B4TX91</accession>
<sequence>MPWIQLKLNTTGANAEELSDALMEAGAVSITFQDTHDTPVFEPLPGETRLWGDTDVIGLFDAETDMKDVVAILEQHPLLGAGFAHKIEQLEDKDWEREWMDNFHPMRFGERLWICPSWRDIPDENAVNVMLDPGLAFGTGTHPTTSLCLQWLDGLDLNGKTVIDFGCGSGILAIAALKLGAAKAIGIDIDPQAIQASRDNAERNGVSDRLELYLPKDQPEAMKADVVVANILAGPLRELAPLISVLPVEGGLLGLSGILASQAESVCDAYAELFTLDPVVEKEEWCRITGRKK</sequence>
<comment type="function">
    <text evidence="1">Methylates ribosomal protein L11.</text>
</comment>
<comment type="catalytic activity">
    <reaction evidence="1">
        <text>L-lysyl-[protein] + 3 S-adenosyl-L-methionine = N(6),N(6),N(6)-trimethyl-L-lysyl-[protein] + 3 S-adenosyl-L-homocysteine + 3 H(+)</text>
        <dbReference type="Rhea" id="RHEA:54192"/>
        <dbReference type="Rhea" id="RHEA-COMP:9752"/>
        <dbReference type="Rhea" id="RHEA-COMP:13826"/>
        <dbReference type="ChEBI" id="CHEBI:15378"/>
        <dbReference type="ChEBI" id="CHEBI:29969"/>
        <dbReference type="ChEBI" id="CHEBI:57856"/>
        <dbReference type="ChEBI" id="CHEBI:59789"/>
        <dbReference type="ChEBI" id="CHEBI:61961"/>
    </reaction>
</comment>
<comment type="subcellular location">
    <subcellularLocation>
        <location evidence="1">Cytoplasm</location>
    </subcellularLocation>
</comment>
<comment type="similarity">
    <text evidence="1">Belongs to the methyltransferase superfamily. PrmA family.</text>
</comment>
<reference key="1">
    <citation type="journal article" date="2011" name="J. Bacteriol.">
        <title>Comparative genomics of 28 Salmonella enterica isolates: evidence for CRISPR-mediated adaptive sublineage evolution.</title>
        <authorList>
            <person name="Fricke W.F."/>
            <person name="Mammel M.K."/>
            <person name="McDermott P.F."/>
            <person name="Tartera C."/>
            <person name="White D.G."/>
            <person name="Leclerc J.E."/>
            <person name="Ravel J."/>
            <person name="Cebula T.A."/>
        </authorList>
    </citation>
    <scope>NUCLEOTIDE SEQUENCE [LARGE SCALE GENOMIC DNA]</scope>
    <source>
        <strain>CVM19633</strain>
    </source>
</reference>
<name>PRMA_SALSV</name>
<feature type="chain" id="PRO_1000132825" description="Ribosomal protein L11 methyltransferase">
    <location>
        <begin position="1"/>
        <end position="293"/>
    </location>
</feature>
<feature type="binding site" evidence="1">
    <location>
        <position position="145"/>
    </location>
    <ligand>
        <name>S-adenosyl-L-methionine</name>
        <dbReference type="ChEBI" id="CHEBI:59789"/>
    </ligand>
</feature>
<feature type="binding site" evidence="1">
    <location>
        <position position="166"/>
    </location>
    <ligand>
        <name>S-adenosyl-L-methionine</name>
        <dbReference type="ChEBI" id="CHEBI:59789"/>
    </ligand>
</feature>
<feature type="binding site" evidence="1">
    <location>
        <position position="188"/>
    </location>
    <ligand>
        <name>S-adenosyl-L-methionine</name>
        <dbReference type="ChEBI" id="CHEBI:59789"/>
    </ligand>
</feature>
<feature type="binding site" evidence="1">
    <location>
        <position position="230"/>
    </location>
    <ligand>
        <name>S-adenosyl-L-methionine</name>
        <dbReference type="ChEBI" id="CHEBI:59789"/>
    </ligand>
</feature>
<protein>
    <recommendedName>
        <fullName evidence="1">Ribosomal protein L11 methyltransferase</fullName>
        <shortName evidence="1">L11 Mtase</shortName>
        <ecNumber evidence="1">2.1.1.-</ecNumber>
    </recommendedName>
</protein>
<dbReference type="EC" id="2.1.1.-" evidence="1"/>
<dbReference type="EMBL" id="CP001127">
    <property type="protein sequence ID" value="ACF88960.1"/>
    <property type="molecule type" value="Genomic_DNA"/>
</dbReference>
<dbReference type="RefSeq" id="WP_001145849.1">
    <property type="nucleotide sequence ID" value="NC_011094.1"/>
</dbReference>
<dbReference type="SMR" id="B4TX91"/>
<dbReference type="KEGG" id="sew:SeSA_A3575"/>
<dbReference type="HOGENOM" id="CLU_049382_4_1_6"/>
<dbReference type="Proteomes" id="UP000001865">
    <property type="component" value="Chromosome"/>
</dbReference>
<dbReference type="GO" id="GO:0005829">
    <property type="term" value="C:cytosol"/>
    <property type="evidence" value="ECO:0007669"/>
    <property type="project" value="TreeGrafter"/>
</dbReference>
<dbReference type="GO" id="GO:0016279">
    <property type="term" value="F:protein-lysine N-methyltransferase activity"/>
    <property type="evidence" value="ECO:0007669"/>
    <property type="project" value="TreeGrafter"/>
</dbReference>
<dbReference type="GO" id="GO:0032259">
    <property type="term" value="P:methylation"/>
    <property type="evidence" value="ECO:0007669"/>
    <property type="project" value="UniProtKB-KW"/>
</dbReference>
<dbReference type="CDD" id="cd02440">
    <property type="entry name" value="AdoMet_MTases"/>
    <property type="match status" value="1"/>
</dbReference>
<dbReference type="FunFam" id="3.40.50.150:FF:000021">
    <property type="entry name" value="Ribosomal protein L11 methyltransferase"/>
    <property type="match status" value="1"/>
</dbReference>
<dbReference type="Gene3D" id="3.40.50.150">
    <property type="entry name" value="Vaccinia Virus protein VP39"/>
    <property type="match status" value="1"/>
</dbReference>
<dbReference type="HAMAP" id="MF_00735">
    <property type="entry name" value="Methyltr_PrmA"/>
    <property type="match status" value="1"/>
</dbReference>
<dbReference type="InterPro" id="IPR050078">
    <property type="entry name" value="Ribosomal_L11_MeTrfase_PrmA"/>
</dbReference>
<dbReference type="InterPro" id="IPR004498">
    <property type="entry name" value="Ribosomal_PrmA_MeTrfase"/>
</dbReference>
<dbReference type="InterPro" id="IPR029063">
    <property type="entry name" value="SAM-dependent_MTases_sf"/>
</dbReference>
<dbReference type="NCBIfam" id="TIGR00406">
    <property type="entry name" value="prmA"/>
    <property type="match status" value="1"/>
</dbReference>
<dbReference type="PANTHER" id="PTHR43648">
    <property type="entry name" value="ELECTRON TRANSFER FLAVOPROTEIN BETA SUBUNIT LYSINE METHYLTRANSFERASE"/>
    <property type="match status" value="1"/>
</dbReference>
<dbReference type="PANTHER" id="PTHR43648:SF1">
    <property type="entry name" value="ELECTRON TRANSFER FLAVOPROTEIN BETA SUBUNIT LYSINE METHYLTRANSFERASE"/>
    <property type="match status" value="1"/>
</dbReference>
<dbReference type="Pfam" id="PF06325">
    <property type="entry name" value="PrmA"/>
    <property type="match status" value="1"/>
</dbReference>
<dbReference type="PIRSF" id="PIRSF000401">
    <property type="entry name" value="RPL11_MTase"/>
    <property type="match status" value="1"/>
</dbReference>
<dbReference type="SUPFAM" id="SSF53335">
    <property type="entry name" value="S-adenosyl-L-methionine-dependent methyltransferases"/>
    <property type="match status" value="1"/>
</dbReference>
<organism>
    <name type="scientific">Salmonella schwarzengrund (strain CVM19633)</name>
    <dbReference type="NCBI Taxonomy" id="439843"/>
    <lineage>
        <taxon>Bacteria</taxon>
        <taxon>Pseudomonadati</taxon>
        <taxon>Pseudomonadota</taxon>
        <taxon>Gammaproteobacteria</taxon>
        <taxon>Enterobacterales</taxon>
        <taxon>Enterobacteriaceae</taxon>
        <taxon>Salmonella</taxon>
    </lineage>
</organism>